<protein>
    <recommendedName>
        <fullName evidence="1">Maturase K</fullName>
    </recommendedName>
    <alternativeName>
        <fullName evidence="1">Intron maturase</fullName>
    </alternativeName>
</protein>
<evidence type="ECO:0000255" key="1">
    <source>
        <dbReference type="HAMAP-Rule" id="MF_01390"/>
    </source>
</evidence>
<gene>
    <name evidence="1" type="primary">matK</name>
</gene>
<organism>
    <name type="scientific">Theobroma cacao</name>
    <name type="common">Cacao</name>
    <name type="synonym">Cocoa</name>
    <dbReference type="NCBI Taxonomy" id="3641"/>
    <lineage>
        <taxon>Eukaryota</taxon>
        <taxon>Viridiplantae</taxon>
        <taxon>Streptophyta</taxon>
        <taxon>Embryophyta</taxon>
        <taxon>Tracheophyta</taxon>
        <taxon>Spermatophyta</taxon>
        <taxon>Magnoliopsida</taxon>
        <taxon>eudicotyledons</taxon>
        <taxon>Gunneridae</taxon>
        <taxon>Pentapetalae</taxon>
        <taxon>rosids</taxon>
        <taxon>malvids</taxon>
        <taxon>Malvales</taxon>
        <taxon>Malvaceae</taxon>
        <taxon>Byttnerioideae</taxon>
        <taxon>Theobroma</taxon>
    </lineage>
</organism>
<accession>Q6EIG9</accession>
<name>MATK_THECC</name>
<reference key="1">
    <citation type="submission" date="2003-06" db="EMBL/GenBank/DDBJ databases">
        <title>Phylogenetic analysis of Malvaceae sensu lato based on chloroplast and nuclear DNA sequences.</title>
        <authorList>
            <person name="Nyffeler R."/>
            <person name="Yen A."/>
            <person name="Alverson W.S."/>
            <person name="Bayer C."/>
            <person name="Blattner F."/>
            <person name="Whitlock B."/>
            <person name="Chase M.W."/>
            <person name="Baum D.A."/>
        </authorList>
    </citation>
    <scope>NUCLEOTIDE SEQUENCE [GENOMIC DNA]</scope>
</reference>
<comment type="function">
    <text evidence="1">Usually encoded in the trnK tRNA gene intron. Probably assists in splicing its own and other chloroplast group II introns.</text>
</comment>
<comment type="subcellular location">
    <subcellularLocation>
        <location>Plastid</location>
        <location>Chloroplast</location>
    </subcellularLocation>
</comment>
<comment type="similarity">
    <text evidence="1">Belongs to the intron maturase 2 family. MatK subfamily.</text>
</comment>
<geneLocation type="chloroplast"/>
<proteinExistence type="inferred from homology"/>
<feature type="chain" id="PRO_0000143732" description="Maturase K">
    <location>
        <begin position="1"/>
        <end position="502"/>
    </location>
</feature>
<dbReference type="EMBL" id="AY321195">
    <property type="protein sequence ID" value="AAQ84277.1"/>
    <property type="molecule type" value="Genomic_DNA"/>
</dbReference>
<dbReference type="Proteomes" id="UP000694886">
    <property type="component" value="Unplaced"/>
</dbReference>
<dbReference type="GO" id="GO:0009507">
    <property type="term" value="C:chloroplast"/>
    <property type="evidence" value="ECO:0007669"/>
    <property type="project" value="UniProtKB-SubCell"/>
</dbReference>
<dbReference type="GO" id="GO:0003723">
    <property type="term" value="F:RNA binding"/>
    <property type="evidence" value="ECO:0007669"/>
    <property type="project" value="UniProtKB-KW"/>
</dbReference>
<dbReference type="GO" id="GO:0006397">
    <property type="term" value="P:mRNA processing"/>
    <property type="evidence" value="ECO:0007669"/>
    <property type="project" value="UniProtKB-KW"/>
</dbReference>
<dbReference type="GO" id="GO:0008380">
    <property type="term" value="P:RNA splicing"/>
    <property type="evidence" value="ECO:0007669"/>
    <property type="project" value="UniProtKB-UniRule"/>
</dbReference>
<dbReference type="GO" id="GO:0008033">
    <property type="term" value="P:tRNA processing"/>
    <property type="evidence" value="ECO:0007669"/>
    <property type="project" value="UniProtKB-KW"/>
</dbReference>
<dbReference type="HAMAP" id="MF_01390">
    <property type="entry name" value="MatK"/>
    <property type="match status" value="1"/>
</dbReference>
<dbReference type="InterPro" id="IPR024937">
    <property type="entry name" value="Domain_X"/>
</dbReference>
<dbReference type="InterPro" id="IPR002866">
    <property type="entry name" value="Maturase_MatK"/>
</dbReference>
<dbReference type="InterPro" id="IPR024942">
    <property type="entry name" value="Maturase_MatK_N"/>
</dbReference>
<dbReference type="PANTHER" id="PTHR34811">
    <property type="entry name" value="MATURASE K"/>
    <property type="match status" value="1"/>
</dbReference>
<dbReference type="PANTHER" id="PTHR34811:SF1">
    <property type="entry name" value="MATURASE K"/>
    <property type="match status" value="1"/>
</dbReference>
<dbReference type="Pfam" id="PF01348">
    <property type="entry name" value="Intron_maturas2"/>
    <property type="match status" value="1"/>
</dbReference>
<dbReference type="Pfam" id="PF01824">
    <property type="entry name" value="MatK_N"/>
    <property type="match status" value="1"/>
</dbReference>
<keyword id="KW-0150">Chloroplast</keyword>
<keyword id="KW-0507">mRNA processing</keyword>
<keyword id="KW-0934">Plastid</keyword>
<keyword id="KW-0694">RNA-binding</keyword>
<keyword id="KW-0819">tRNA processing</keyword>
<sequence>MKESQVYLELNRSRQHDFLYPLIFREYIYALAYDHGLNKSMILLENEDYGNKFSSLIVKRLIIRMDQQNHLIISANDSNQNPFFGHNNNLYSQMISAGFAVIVEITFSLRLVSYSQGKEVAKSHNLQSIHSIFPFLEDKFSHLNYVLDVLIPHPIHLEILVQALRYWVKDASSLHLLRFSLYEYCNLKSFFTPKKSISIFNPRLFLFLYNSHVCEYESIFLFLRNQSSHLRSTSSGVFLERIYFYGKIEYLVEVFCNDFQNNLWLFKDPFIHFIRYQGKAILASKDTSLLMNKWKYYFVDLWQYYFYVWSQSGRVRINQLSKYSLDFLGYLSSVRLNPSVVRSQMLESSFIIDNAMKKLDTRIPIISLIGSLSKAKFCNTLGHPISKPTWXDSSDSDIIDRFVRICRNLSHYHSGSSKKKSLYRIKYILRLSCVKTLARKHKSTVRAFLKRLGSEFLEEFFMEEEQVFSLMFPRVFSTSRKLYRGRIWYLDIICINVLVNNE</sequence>